<proteinExistence type="inferred from homology"/>
<sequence>MKPLNIIFAGTPDFAARHLQALLNSHHNVIGVYTQPDRPAGRGKKLTASPVKELAVGNNIPVYQPGSLRKEPAQQELAALNADIMVVVAYGLILPKVVLNTPRLGCINVHGSILPRWRGAAPIQRALWAGDKETGVTVMQMDVGLDTGDMLLKTTLPIEDSDTSASLYEKLAEQGPVALLQALEGLANGTLAAEKQDEALANYAEKLSKEEARLDWNKSAQQLWQEVRAFNPWPVSYFEHQGNTIKVWQTQVSETTSTAAPGTIISASKKGIEVATADGVLTLLNMQLPGKKPLNVADILNARGEWFSPNTRLANEAQ</sequence>
<evidence type="ECO:0000255" key="1">
    <source>
        <dbReference type="HAMAP-Rule" id="MF_00182"/>
    </source>
</evidence>
<keyword id="KW-0648">Protein biosynthesis</keyword>
<keyword id="KW-0808">Transferase</keyword>
<dbReference type="EC" id="2.1.2.9" evidence="1"/>
<dbReference type="EMBL" id="CP000753">
    <property type="protein sequence ID" value="ABS06199.1"/>
    <property type="molecule type" value="Genomic_DNA"/>
</dbReference>
<dbReference type="RefSeq" id="WP_011981999.1">
    <property type="nucleotide sequence ID" value="NC_009665.1"/>
</dbReference>
<dbReference type="SMR" id="A6WHB0"/>
<dbReference type="KEGG" id="sbm:Shew185_0026"/>
<dbReference type="HOGENOM" id="CLU_033347_1_2_6"/>
<dbReference type="GO" id="GO:0005829">
    <property type="term" value="C:cytosol"/>
    <property type="evidence" value="ECO:0007669"/>
    <property type="project" value="TreeGrafter"/>
</dbReference>
<dbReference type="GO" id="GO:0004479">
    <property type="term" value="F:methionyl-tRNA formyltransferase activity"/>
    <property type="evidence" value="ECO:0007669"/>
    <property type="project" value="UniProtKB-UniRule"/>
</dbReference>
<dbReference type="CDD" id="cd08646">
    <property type="entry name" value="FMT_core_Met-tRNA-FMT_N"/>
    <property type="match status" value="1"/>
</dbReference>
<dbReference type="CDD" id="cd08704">
    <property type="entry name" value="Met_tRNA_FMT_C"/>
    <property type="match status" value="1"/>
</dbReference>
<dbReference type="FunFam" id="3.40.50.12230:FF:000001">
    <property type="entry name" value="Methionyl-tRNA formyltransferase"/>
    <property type="match status" value="1"/>
</dbReference>
<dbReference type="FunFam" id="3.40.50.170:FF:000003">
    <property type="entry name" value="Methionyl-tRNA formyltransferase"/>
    <property type="match status" value="1"/>
</dbReference>
<dbReference type="Gene3D" id="3.10.25.10">
    <property type="entry name" value="Formyl transferase, C-terminal domain"/>
    <property type="match status" value="1"/>
</dbReference>
<dbReference type="Gene3D" id="3.40.50.170">
    <property type="entry name" value="Formyl transferase, N-terminal domain"/>
    <property type="match status" value="1"/>
</dbReference>
<dbReference type="HAMAP" id="MF_00182">
    <property type="entry name" value="Formyl_trans"/>
    <property type="match status" value="1"/>
</dbReference>
<dbReference type="InterPro" id="IPR005794">
    <property type="entry name" value="Fmt"/>
</dbReference>
<dbReference type="InterPro" id="IPR005793">
    <property type="entry name" value="Formyl_trans_C"/>
</dbReference>
<dbReference type="InterPro" id="IPR037022">
    <property type="entry name" value="Formyl_trans_C_sf"/>
</dbReference>
<dbReference type="InterPro" id="IPR002376">
    <property type="entry name" value="Formyl_transf_N"/>
</dbReference>
<dbReference type="InterPro" id="IPR036477">
    <property type="entry name" value="Formyl_transf_N_sf"/>
</dbReference>
<dbReference type="InterPro" id="IPR011034">
    <property type="entry name" value="Formyl_transferase-like_C_sf"/>
</dbReference>
<dbReference type="InterPro" id="IPR001555">
    <property type="entry name" value="GART_AS"/>
</dbReference>
<dbReference type="InterPro" id="IPR044135">
    <property type="entry name" value="Met-tRNA-FMT_C"/>
</dbReference>
<dbReference type="InterPro" id="IPR041711">
    <property type="entry name" value="Met-tRNA-FMT_N"/>
</dbReference>
<dbReference type="NCBIfam" id="TIGR00460">
    <property type="entry name" value="fmt"/>
    <property type="match status" value="1"/>
</dbReference>
<dbReference type="PANTHER" id="PTHR11138">
    <property type="entry name" value="METHIONYL-TRNA FORMYLTRANSFERASE"/>
    <property type="match status" value="1"/>
</dbReference>
<dbReference type="PANTHER" id="PTHR11138:SF5">
    <property type="entry name" value="METHIONYL-TRNA FORMYLTRANSFERASE, MITOCHONDRIAL"/>
    <property type="match status" value="1"/>
</dbReference>
<dbReference type="Pfam" id="PF02911">
    <property type="entry name" value="Formyl_trans_C"/>
    <property type="match status" value="1"/>
</dbReference>
<dbReference type="Pfam" id="PF00551">
    <property type="entry name" value="Formyl_trans_N"/>
    <property type="match status" value="1"/>
</dbReference>
<dbReference type="SUPFAM" id="SSF50486">
    <property type="entry name" value="FMT C-terminal domain-like"/>
    <property type="match status" value="1"/>
</dbReference>
<dbReference type="SUPFAM" id="SSF53328">
    <property type="entry name" value="Formyltransferase"/>
    <property type="match status" value="1"/>
</dbReference>
<dbReference type="PROSITE" id="PS00373">
    <property type="entry name" value="GART"/>
    <property type="match status" value="1"/>
</dbReference>
<gene>
    <name evidence="1" type="primary">fmt</name>
    <name type="ordered locus">Shew185_0026</name>
</gene>
<protein>
    <recommendedName>
        <fullName evidence="1">Methionyl-tRNA formyltransferase</fullName>
        <ecNumber evidence="1">2.1.2.9</ecNumber>
    </recommendedName>
</protein>
<reference key="1">
    <citation type="submission" date="2007-07" db="EMBL/GenBank/DDBJ databases">
        <title>Complete sequence of chromosome of Shewanella baltica OS185.</title>
        <authorList>
            <consortium name="US DOE Joint Genome Institute"/>
            <person name="Copeland A."/>
            <person name="Lucas S."/>
            <person name="Lapidus A."/>
            <person name="Barry K."/>
            <person name="Glavina del Rio T."/>
            <person name="Dalin E."/>
            <person name="Tice H."/>
            <person name="Pitluck S."/>
            <person name="Sims D."/>
            <person name="Brettin T."/>
            <person name="Bruce D."/>
            <person name="Detter J.C."/>
            <person name="Han C."/>
            <person name="Schmutz J."/>
            <person name="Larimer F."/>
            <person name="Land M."/>
            <person name="Hauser L."/>
            <person name="Kyrpides N."/>
            <person name="Mikhailova N."/>
            <person name="Brettar I."/>
            <person name="Rodrigues J."/>
            <person name="Konstantinidis K."/>
            <person name="Tiedje J."/>
            <person name="Richardson P."/>
        </authorList>
    </citation>
    <scope>NUCLEOTIDE SEQUENCE [LARGE SCALE GENOMIC DNA]</scope>
    <source>
        <strain>OS185</strain>
    </source>
</reference>
<name>FMT_SHEB8</name>
<feature type="chain" id="PRO_1000020153" description="Methionyl-tRNA formyltransferase">
    <location>
        <begin position="1"/>
        <end position="318"/>
    </location>
</feature>
<feature type="binding site" evidence="1">
    <location>
        <begin position="112"/>
        <end position="115"/>
    </location>
    <ligand>
        <name>(6S)-5,6,7,8-tetrahydrofolate</name>
        <dbReference type="ChEBI" id="CHEBI:57453"/>
    </ligand>
</feature>
<organism>
    <name type="scientific">Shewanella baltica (strain OS185)</name>
    <dbReference type="NCBI Taxonomy" id="402882"/>
    <lineage>
        <taxon>Bacteria</taxon>
        <taxon>Pseudomonadati</taxon>
        <taxon>Pseudomonadota</taxon>
        <taxon>Gammaproteobacteria</taxon>
        <taxon>Alteromonadales</taxon>
        <taxon>Shewanellaceae</taxon>
        <taxon>Shewanella</taxon>
    </lineage>
</organism>
<comment type="function">
    <text evidence="1">Attaches a formyl group to the free amino group of methionyl-tRNA(fMet). The formyl group appears to play a dual role in the initiator identity of N-formylmethionyl-tRNA by promoting its recognition by IF2 and preventing the misappropriation of this tRNA by the elongation apparatus.</text>
</comment>
<comment type="catalytic activity">
    <reaction evidence="1">
        <text>L-methionyl-tRNA(fMet) + (6R)-10-formyltetrahydrofolate = N-formyl-L-methionyl-tRNA(fMet) + (6S)-5,6,7,8-tetrahydrofolate + H(+)</text>
        <dbReference type="Rhea" id="RHEA:24380"/>
        <dbReference type="Rhea" id="RHEA-COMP:9952"/>
        <dbReference type="Rhea" id="RHEA-COMP:9953"/>
        <dbReference type="ChEBI" id="CHEBI:15378"/>
        <dbReference type="ChEBI" id="CHEBI:57453"/>
        <dbReference type="ChEBI" id="CHEBI:78530"/>
        <dbReference type="ChEBI" id="CHEBI:78844"/>
        <dbReference type="ChEBI" id="CHEBI:195366"/>
        <dbReference type="EC" id="2.1.2.9"/>
    </reaction>
</comment>
<comment type="similarity">
    <text evidence="1">Belongs to the Fmt family.</text>
</comment>
<accession>A6WHB0</accession>